<dbReference type="EMBL" id="CP000361">
    <property type="protein sequence ID" value="ABV67024.1"/>
    <property type="molecule type" value="Genomic_DNA"/>
</dbReference>
<dbReference type="RefSeq" id="WP_004510827.1">
    <property type="nucleotide sequence ID" value="NC_009850.1"/>
</dbReference>
<dbReference type="SMR" id="A8ESV0"/>
<dbReference type="STRING" id="367737.Abu_0759"/>
<dbReference type="GeneID" id="24303735"/>
<dbReference type="KEGG" id="abu:Abu_0759"/>
<dbReference type="eggNOG" id="COG0197">
    <property type="taxonomic scope" value="Bacteria"/>
</dbReference>
<dbReference type="HOGENOM" id="CLU_078858_2_1_7"/>
<dbReference type="Proteomes" id="UP000001136">
    <property type="component" value="Chromosome"/>
</dbReference>
<dbReference type="GO" id="GO:0022625">
    <property type="term" value="C:cytosolic large ribosomal subunit"/>
    <property type="evidence" value="ECO:0007669"/>
    <property type="project" value="TreeGrafter"/>
</dbReference>
<dbReference type="GO" id="GO:0019843">
    <property type="term" value="F:rRNA binding"/>
    <property type="evidence" value="ECO:0007669"/>
    <property type="project" value="UniProtKB-UniRule"/>
</dbReference>
<dbReference type="GO" id="GO:0003735">
    <property type="term" value="F:structural constituent of ribosome"/>
    <property type="evidence" value="ECO:0007669"/>
    <property type="project" value="InterPro"/>
</dbReference>
<dbReference type="GO" id="GO:0000049">
    <property type="term" value="F:tRNA binding"/>
    <property type="evidence" value="ECO:0007669"/>
    <property type="project" value="UniProtKB-KW"/>
</dbReference>
<dbReference type="GO" id="GO:0006412">
    <property type="term" value="P:translation"/>
    <property type="evidence" value="ECO:0007669"/>
    <property type="project" value="UniProtKB-UniRule"/>
</dbReference>
<dbReference type="CDD" id="cd01433">
    <property type="entry name" value="Ribosomal_L16_L10e"/>
    <property type="match status" value="1"/>
</dbReference>
<dbReference type="FunFam" id="3.90.1170.10:FF:000001">
    <property type="entry name" value="50S ribosomal protein L16"/>
    <property type="match status" value="1"/>
</dbReference>
<dbReference type="Gene3D" id="3.90.1170.10">
    <property type="entry name" value="Ribosomal protein L10e/L16"/>
    <property type="match status" value="1"/>
</dbReference>
<dbReference type="HAMAP" id="MF_01342">
    <property type="entry name" value="Ribosomal_uL16"/>
    <property type="match status" value="1"/>
</dbReference>
<dbReference type="InterPro" id="IPR047873">
    <property type="entry name" value="Ribosomal_uL16"/>
</dbReference>
<dbReference type="InterPro" id="IPR000114">
    <property type="entry name" value="Ribosomal_uL16_bact-type"/>
</dbReference>
<dbReference type="InterPro" id="IPR020798">
    <property type="entry name" value="Ribosomal_uL16_CS"/>
</dbReference>
<dbReference type="InterPro" id="IPR016180">
    <property type="entry name" value="Ribosomal_uL16_dom"/>
</dbReference>
<dbReference type="InterPro" id="IPR036920">
    <property type="entry name" value="Ribosomal_uL16_sf"/>
</dbReference>
<dbReference type="NCBIfam" id="TIGR01164">
    <property type="entry name" value="rplP_bact"/>
    <property type="match status" value="1"/>
</dbReference>
<dbReference type="PANTHER" id="PTHR12220">
    <property type="entry name" value="50S/60S RIBOSOMAL PROTEIN L16"/>
    <property type="match status" value="1"/>
</dbReference>
<dbReference type="PANTHER" id="PTHR12220:SF13">
    <property type="entry name" value="LARGE RIBOSOMAL SUBUNIT PROTEIN UL16M"/>
    <property type="match status" value="1"/>
</dbReference>
<dbReference type="Pfam" id="PF00252">
    <property type="entry name" value="Ribosomal_L16"/>
    <property type="match status" value="1"/>
</dbReference>
<dbReference type="PRINTS" id="PR00060">
    <property type="entry name" value="RIBOSOMALL16"/>
</dbReference>
<dbReference type="SUPFAM" id="SSF54686">
    <property type="entry name" value="Ribosomal protein L16p/L10e"/>
    <property type="match status" value="1"/>
</dbReference>
<dbReference type="PROSITE" id="PS00701">
    <property type="entry name" value="RIBOSOMAL_L16_2"/>
    <property type="match status" value="1"/>
</dbReference>
<sequence>MLMPKRTKFRKMMKGRNRGMAHRGNSLAYGDFGIKAVEHGRIDSRQIEASRIAMTRKVKRQAKVWIMVFPDKPLTAKPLETRMGKGKGSVDKWVMNIKPGRICFEMAGVGEELAREALALAMHKLPFKTKIVTRDSENELY</sequence>
<accession>A8ESV0</accession>
<gene>
    <name evidence="1" type="primary">rplP</name>
    <name type="ordered locus">Abu_0759</name>
</gene>
<feature type="chain" id="PRO_1000067674" description="Large ribosomal subunit protein uL16">
    <location>
        <begin position="1"/>
        <end position="141"/>
    </location>
</feature>
<protein>
    <recommendedName>
        <fullName evidence="1">Large ribosomal subunit protein uL16</fullName>
    </recommendedName>
    <alternativeName>
        <fullName evidence="2">50S ribosomal protein L16</fullName>
    </alternativeName>
</protein>
<reference key="1">
    <citation type="journal article" date="2007" name="PLoS ONE">
        <title>The complete genome sequence and analysis of the Epsilonproteobacterium Arcobacter butzleri.</title>
        <authorList>
            <person name="Miller W.G."/>
            <person name="Parker C.T."/>
            <person name="Rubenfield M."/>
            <person name="Mendz G.L."/>
            <person name="Woesten M.M.S.M."/>
            <person name="Ussery D.W."/>
            <person name="Stolz J.F."/>
            <person name="Binnewies T.T."/>
            <person name="Hallin P.F."/>
            <person name="Wang G."/>
            <person name="Malek J.A."/>
            <person name="Rogosin A."/>
            <person name="Stanker L.H."/>
            <person name="Mandrell R.E."/>
        </authorList>
    </citation>
    <scope>NUCLEOTIDE SEQUENCE [LARGE SCALE GENOMIC DNA]</scope>
    <source>
        <strain>RM4018</strain>
    </source>
</reference>
<organism>
    <name type="scientific">Aliarcobacter butzleri (strain RM4018)</name>
    <name type="common">Arcobacter butzleri</name>
    <dbReference type="NCBI Taxonomy" id="367737"/>
    <lineage>
        <taxon>Bacteria</taxon>
        <taxon>Pseudomonadati</taxon>
        <taxon>Campylobacterota</taxon>
        <taxon>Epsilonproteobacteria</taxon>
        <taxon>Campylobacterales</taxon>
        <taxon>Arcobacteraceae</taxon>
        <taxon>Aliarcobacter</taxon>
    </lineage>
</organism>
<keyword id="KW-1185">Reference proteome</keyword>
<keyword id="KW-0687">Ribonucleoprotein</keyword>
<keyword id="KW-0689">Ribosomal protein</keyword>
<keyword id="KW-0694">RNA-binding</keyword>
<keyword id="KW-0699">rRNA-binding</keyword>
<keyword id="KW-0820">tRNA-binding</keyword>
<proteinExistence type="inferred from homology"/>
<evidence type="ECO:0000255" key="1">
    <source>
        <dbReference type="HAMAP-Rule" id="MF_01342"/>
    </source>
</evidence>
<evidence type="ECO:0000305" key="2"/>
<name>RL16_ALIB4</name>
<comment type="function">
    <text evidence="1">Binds 23S rRNA and is also seen to make contacts with the A and possibly P site tRNAs.</text>
</comment>
<comment type="subunit">
    <text evidence="1">Part of the 50S ribosomal subunit.</text>
</comment>
<comment type="similarity">
    <text evidence="1">Belongs to the universal ribosomal protein uL16 family.</text>
</comment>